<accession>Q9JXG3</accession>
<organism>
    <name type="scientific">Neisseria meningitidis serogroup B (strain ATCC BAA-335 / MC58)</name>
    <dbReference type="NCBI Taxonomy" id="122586"/>
    <lineage>
        <taxon>Bacteria</taxon>
        <taxon>Pseudomonadati</taxon>
        <taxon>Pseudomonadota</taxon>
        <taxon>Betaproteobacteria</taxon>
        <taxon>Neisseriales</taxon>
        <taxon>Neisseriaceae</taxon>
        <taxon>Neisseria</taxon>
    </lineage>
</organism>
<dbReference type="EMBL" id="AE002098">
    <property type="protein sequence ID" value="AAF42382.1"/>
    <property type="molecule type" value="Genomic_DNA"/>
</dbReference>
<dbReference type="PIR" id="C81010">
    <property type="entry name" value="C81010"/>
</dbReference>
<dbReference type="RefSeq" id="NP_275053.1">
    <property type="nucleotide sequence ID" value="NC_003112.2"/>
</dbReference>
<dbReference type="RefSeq" id="WP_002219958.1">
    <property type="nucleotide sequence ID" value="NC_003112.2"/>
</dbReference>
<dbReference type="SMR" id="Q9JXG3"/>
<dbReference type="STRING" id="122586.NMB2063"/>
<dbReference type="PaxDb" id="122586-NMB2063"/>
<dbReference type="KEGG" id="nme:NMB2063"/>
<dbReference type="PATRIC" id="fig|122586.8.peg.2643"/>
<dbReference type="HOGENOM" id="CLU_180796_3_1_4"/>
<dbReference type="InParanoid" id="Q9JXG3"/>
<dbReference type="OrthoDB" id="8613642at2"/>
<dbReference type="Proteomes" id="UP000000425">
    <property type="component" value="Chromosome"/>
</dbReference>
<dbReference type="Gene3D" id="1.20.5.300">
    <property type="match status" value="1"/>
</dbReference>
<dbReference type="HAMAP" id="MF_00715">
    <property type="entry name" value="SlyX"/>
    <property type="match status" value="1"/>
</dbReference>
<dbReference type="InterPro" id="IPR007236">
    <property type="entry name" value="SlyX"/>
</dbReference>
<dbReference type="NCBIfam" id="NF003316">
    <property type="entry name" value="PRK04325.1"/>
    <property type="match status" value="1"/>
</dbReference>
<dbReference type="PANTHER" id="PTHR36508">
    <property type="entry name" value="PROTEIN SLYX"/>
    <property type="match status" value="1"/>
</dbReference>
<dbReference type="PANTHER" id="PTHR36508:SF1">
    <property type="entry name" value="PROTEIN SLYX"/>
    <property type="match status" value="1"/>
</dbReference>
<dbReference type="Pfam" id="PF04102">
    <property type="entry name" value="SlyX"/>
    <property type="match status" value="1"/>
</dbReference>
<name>SLYX_NEIMB</name>
<gene>
    <name evidence="1" type="primary">slyX</name>
    <name type="ordered locus">NMB2063</name>
</gene>
<sequence>MDAVQELERRIVELEIQSALQEDVIAGLNAMVAELRQTLDLQQAQLRLLYQKMQDRNPDAQEPYSLRDEIPPHY</sequence>
<evidence type="ECO:0000255" key="1">
    <source>
        <dbReference type="HAMAP-Rule" id="MF_00715"/>
    </source>
</evidence>
<comment type="similarity">
    <text evidence="1">Belongs to the SlyX family.</text>
</comment>
<feature type="chain" id="PRO_0000209205" description="Protein SlyX homolog">
    <location>
        <begin position="1"/>
        <end position="74"/>
    </location>
</feature>
<protein>
    <recommendedName>
        <fullName evidence="1">Protein SlyX homolog</fullName>
    </recommendedName>
</protein>
<reference key="1">
    <citation type="journal article" date="2000" name="Science">
        <title>Complete genome sequence of Neisseria meningitidis serogroup B strain MC58.</title>
        <authorList>
            <person name="Tettelin H."/>
            <person name="Saunders N.J."/>
            <person name="Heidelberg J.F."/>
            <person name="Jeffries A.C."/>
            <person name="Nelson K.E."/>
            <person name="Eisen J.A."/>
            <person name="Ketchum K.A."/>
            <person name="Hood D.W."/>
            <person name="Peden J.F."/>
            <person name="Dodson R.J."/>
            <person name="Nelson W.C."/>
            <person name="Gwinn M.L."/>
            <person name="DeBoy R.T."/>
            <person name="Peterson J.D."/>
            <person name="Hickey E.K."/>
            <person name="Haft D.H."/>
            <person name="Salzberg S.L."/>
            <person name="White O."/>
            <person name="Fleischmann R.D."/>
            <person name="Dougherty B.A."/>
            <person name="Mason T.M."/>
            <person name="Ciecko A."/>
            <person name="Parksey D.S."/>
            <person name="Blair E."/>
            <person name="Cittone H."/>
            <person name="Clark E.B."/>
            <person name="Cotton M.D."/>
            <person name="Utterback T.R."/>
            <person name="Khouri H.M."/>
            <person name="Qin H."/>
            <person name="Vamathevan J.J."/>
            <person name="Gill J."/>
            <person name="Scarlato V."/>
            <person name="Masignani V."/>
            <person name="Pizza M."/>
            <person name="Grandi G."/>
            <person name="Sun L."/>
            <person name="Smith H.O."/>
            <person name="Fraser C.M."/>
            <person name="Moxon E.R."/>
            <person name="Rappuoli R."/>
            <person name="Venter J.C."/>
        </authorList>
    </citation>
    <scope>NUCLEOTIDE SEQUENCE [LARGE SCALE GENOMIC DNA]</scope>
    <source>
        <strain>ATCC BAA-335 / MC58</strain>
    </source>
</reference>
<proteinExistence type="inferred from homology"/>
<keyword id="KW-1185">Reference proteome</keyword>